<keyword id="KW-1185">Reference proteome</keyword>
<keyword id="KW-0694">RNA-binding</keyword>
<keyword id="KW-0346">Stress response</keyword>
<proteinExistence type="inferred from homology"/>
<comment type="function">
    <text evidence="1">RNA chaperone that binds small regulatory RNA (sRNAs) and mRNAs to facilitate mRNA translational regulation in response to envelope stress, environmental stress and changes in metabolite concentrations. Also binds with high specificity to tRNAs.</text>
</comment>
<comment type="subunit">
    <text evidence="1">Homohexamer.</text>
</comment>
<comment type="similarity">
    <text evidence="1">Belongs to the Hfq family.</text>
</comment>
<feature type="chain" id="PRO_1000080670" description="RNA-binding protein Hfq">
    <location>
        <begin position="1"/>
        <end position="90"/>
    </location>
</feature>
<feature type="domain" description="Sm" evidence="2">
    <location>
        <begin position="11"/>
        <end position="71"/>
    </location>
</feature>
<sequence length="90" mass="10068">MSHDKKQNLQDVFLNSVRKTKTPLTIFLVNGVKLQGVVTWFDNFCVLLRRDGLSQLVYKHAISTIMPAAPVSLFEDDKADDDAAEESATD</sequence>
<name>HFQ_MARMM</name>
<dbReference type="EMBL" id="CP000449">
    <property type="protein sequence ID" value="ABI65740.1"/>
    <property type="molecule type" value="Genomic_DNA"/>
</dbReference>
<dbReference type="RefSeq" id="WP_011643387.1">
    <property type="nucleotide sequence ID" value="NC_008347.1"/>
</dbReference>
<dbReference type="SMR" id="Q0APP7"/>
<dbReference type="STRING" id="394221.Mmar10_1448"/>
<dbReference type="KEGG" id="mmr:Mmar10_1448"/>
<dbReference type="eggNOG" id="COG1923">
    <property type="taxonomic scope" value="Bacteria"/>
</dbReference>
<dbReference type="HOGENOM" id="CLU_113688_0_0_5"/>
<dbReference type="OrthoDB" id="9799751at2"/>
<dbReference type="Proteomes" id="UP000001964">
    <property type="component" value="Chromosome"/>
</dbReference>
<dbReference type="GO" id="GO:0005829">
    <property type="term" value="C:cytosol"/>
    <property type="evidence" value="ECO:0007669"/>
    <property type="project" value="TreeGrafter"/>
</dbReference>
<dbReference type="GO" id="GO:0003723">
    <property type="term" value="F:RNA binding"/>
    <property type="evidence" value="ECO:0007669"/>
    <property type="project" value="UniProtKB-UniRule"/>
</dbReference>
<dbReference type="GO" id="GO:0006355">
    <property type="term" value="P:regulation of DNA-templated transcription"/>
    <property type="evidence" value="ECO:0007669"/>
    <property type="project" value="InterPro"/>
</dbReference>
<dbReference type="GO" id="GO:0043487">
    <property type="term" value="P:regulation of RNA stability"/>
    <property type="evidence" value="ECO:0007669"/>
    <property type="project" value="TreeGrafter"/>
</dbReference>
<dbReference type="GO" id="GO:0045974">
    <property type="term" value="P:regulation of translation, ncRNA-mediated"/>
    <property type="evidence" value="ECO:0007669"/>
    <property type="project" value="TreeGrafter"/>
</dbReference>
<dbReference type="CDD" id="cd01716">
    <property type="entry name" value="Hfq"/>
    <property type="match status" value="1"/>
</dbReference>
<dbReference type="FunFam" id="2.30.30.100:FF:000001">
    <property type="entry name" value="RNA-binding protein Hfq"/>
    <property type="match status" value="1"/>
</dbReference>
<dbReference type="Gene3D" id="2.30.30.100">
    <property type="match status" value="1"/>
</dbReference>
<dbReference type="HAMAP" id="MF_00436">
    <property type="entry name" value="Hfq"/>
    <property type="match status" value="1"/>
</dbReference>
<dbReference type="InterPro" id="IPR005001">
    <property type="entry name" value="Hfq"/>
</dbReference>
<dbReference type="InterPro" id="IPR010920">
    <property type="entry name" value="LSM_dom_sf"/>
</dbReference>
<dbReference type="InterPro" id="IPR047575">
    <property type="entry name" value="Sm"/>
</dbReference>
<dbReference type="NCBIfam" id="TIGR02383">
    <property type="entry name" value="Hfq"/>
    <property type="match status" value="1"/>
</dbReference>
<dbReference type="NCBIfam" id="NF001602">
    <property type="entry name" value="PRK00395.1"/>
    <property type="match status" value="1"/>
</dbReference>
<dbReference type="PANTHER" id="PTHR34772">
    <property type="entry name" value="RNA-BINDING PROTEIN HFQ"/>
    <property type="match status" value="1"/>
</dbReference>
<dbReference type="PANTHER" id="PTHR34772:SF1">
    <property type="entry name" value="RNA-BINDING PROTEIN HFQ"/>
    <property type="match status" value="1"/>
</dbReference>
<dbReference type="Pfam" id="PF17209">
    <property type="entry name" value="Hfq"/>
    <property type="match status" value="1"/>
</dbReference>
<dbReference type="SUPFAM" id="SSF50182">
    <property type="entry name" value="Sm-like ribonucleoproteins"/>
    <property type="match status" value="1"/>
</dbReference>
<dbReference type="PROSITE" id="PS52002">
    <property type="entry name" value="SM"/>
    <property type="match status" value="1"/>
</dbReference>
<organism>
    <name type="scientific">Maricaulis maris (strain MCS10)</name>
    <name type="common">Caulobacter maris</name>
    <dbReference type="NCBI Taxonomy" id="394221"/>
    <lineage>
        <taxon>Bacteria</taxon>
        <taxon>Pseudomonadati</taxon>
        <taxon>Pseudomonadota</taxon>
        <taxon>Alphaproteobacteria</taxon>
        <taxon>Maricaulales</taxon>
        <taxon>Maricaulaceae</taxon>
        <taxon>Maricaulis</taxon>
    </lineage>
</organism>
<accession>Q0APP7</accession>
<reference key="1">
    <citation type="submission" date="2006-08" db="EMBL/GenBank/DDBJ databases">
        <title>Complete sequence of Maricaulis maris MCS10.</title>
        <authorList>
            <consortium name="US DOE Joint Genome Institute"/>
            <person name="Copeland A."/>
            <person name="Lucas S."/>
            <person name="Lapidus A."/>
            <person name="Barry K."/>
            <person name="Detter J.C."/>
            <person name="Glavina del Rio T."/>
            <person name="Hammon N."/>
            <person name="Israni S."/>
            <person name="Dalin E."/>
            <person name="Tice H."/>
            <person name="Pitluck S."/>
            <person name="Saunders E."/>
            <person name="Brettin T."/>
            <person name="Bruce D."/>
            <person name="Han C."/>
            <person name="Tapia R."/>
            <person name="Gilna P."/>
            <person name="Schmutz J."/>
            <person name="Larimer F."/>
            <person name="Land M."/>
            <person name="Hauser L."/>
            <person name="Kyrpides N."/>
            <person name="Mikhailova N."/>
            <person name="Viollier P."/>
            <person name="Stephens C."/>
            <person name="Richardson P."/>
        </authorList>
    </citation>
    <scope>NUCLEOTIDE SEQUENCE [LARGE SCALE GENOMIC DNA]</scope>
    <source>
        <strain>MCS10</strain>
    </source>
</reference>
<gene>
    <name evidence="1" type="primary">hfq</name>
    <name type="ordered locus">Mmar10_1448</name>
</gene>
<protein>
    <recommendedName>
        <fullName evidence="1">RNA-binding protein Hfq</fullName>
    </recommendedName>
</protein>
<evidence type="ECO:0000255" key="1">
    <source>
        <dbReference type="HAMAP-Rule" id="MF_00436"/>
    </source>
</evidence>
<evidence type="ECO:0000255" key="2">
    <source>
        <dbReference type="PROSITE-ProRule" id="PRU01346"/>
    </source>
</evidence>